<gene>
    <name type="primary">purB</name>
    <name type="ordered locus">HP_1112</name>
</gene>
<dbReference type="EC" id="4.3.2.2" evidence="2"/>
<dbReference type="EMBL" id="AE000511">
    <property type="protein sequence ID" value="AAD08156.1"/>
    <property type="molecule type" value="Genomic_DNA"/>
</dbReference>
<dbReference type="PIR" id="H64658">
    <property type="entry name" value="H64658"/>
</dbReference>
<dbReference type="RefSeq" id="NP_207903.1">
    <property type="nucleotide sequence ID" value="NC_000915.1"/>
</dbReference>
<dbReference type="RefSeq" id="WP_000893828.1">
    <property type="nucleotide sequence ID" value="NC_018939.1"/>
</dbReference>
<dbReference type="SMR" id="P56468"/>
<dbReference type="FunCoup" id="P56468">
    <property type="interactions" value="390"/>
</dbReference>
<dbReference type="STRING" id="85962.HP_1112"/>
<dbReference type="PaxDb" id="85962-C694_05735"/>
<dbReference type="EnsemblBacteria" id="AAD08156">
    <property type="protein sequence ID" value="AAD08156"/>
    <property type="gene ID" value="HP_1112"/>
</dbReference>
<dbReference type="KEGG" id="heo:C694_05735"/>
<dbReference type="KEGG" id="hpy:HP_1112"/>
<dbReference type="PATRIC" id="fig|85962.47.peg.1193"/>
<dbReference type="eggNOG" id="COG0015">
    <property type="taxonomic scope" value="Bacteria"/>
</dbReference>
<dbReference type="InParanoid" id="P56468"/>
<dbReference type="OrthoDB" id="9768878at2"/>
<dbReference type="PhylomeDB" id="P56468"/>
<dbReference type="UniPathway" id="UPA00074">
    <property type="reaction ID" value="UER00132"/>
</dbReference>
<dbReference type="UniPathway" id="UPA00075">
    <property type="reaction ID" value="UER00336"/>
</dbReference>
<dbReference type="Proteomes" id="UP000000429">
    <property type="component" value="Chromosome"/>
</dbReference>
<dbReference type="GO" id="GO:0005829">
    <property type="term" value="C:cytosol"/>
    <property type="evidence" value="ECO:0000318"/>
    <property type="project" value="GO_Central"/>
</dbReference>
<dbReference type="GO" id="GO:0070626">
    <property type="term" value="F:(S)-2-(5-amino-1-(5-phospho-D-ribosyl)imidazole-4-carboxamido) succinate lyase (fumarate-forming) activity"/>
    <property type="evidence" value="ECO:0000318"/>
    <property type="project" value="GO_Central"/>
</dbReference>
<dbReference type="GO" id="GO:0004018">
    <property type="term" value="F:N6-(1,2-dicarboxyethyl)AMP AMP-lyase (fumarate-forming) activity"/>
    <property type="evidence" value="ECO:0000318"/>
    <property type="project" value="GO_Central"/>
</dbReference>
<dbReference type="GO" id="GO:0044208">
    <property type="term" value="P:'de novo' AMP biosynthetic process"/>
    <property type="evidence" value="ECO:0000318"/>
    <property type="project" value="GO_Central"/>
</dbReference>
<dbReference type="GO" id="GO:0006189">
    <property type="term" value="P:'de novo' IMP biosynthetic process"/>
    <property type="evidence" value="ECO:0007669"/>
    <property type="project" value="UniProtKB-UniPathway"/>
</dbReference>
<dbReference type="CDD" id="cd01360">
    <property type="entry name" value="Adenylsuccinate_lyase_1"/>
    <property type="match status" value="1"/>
</dbReference>
<dbReference type="FunFam" id="1.10.40.30:FF:000007">
    <property type="entry name" value="Adenylosuccinate lyase"/>
    <property type="match status" value="1"/>
</dbReference>
<dbReference type="FunFam" id="1.20.200.10:FF:000008">
    <property type="entry name" value="Adenylosuccinate lyase"/>
    <property type="match status" value="1"/>
</dbReference>
<dbReference type="Gene3D" id="1.10.40.30">
    <property type="entry name" value="Fumarase/aspartase (C-terminal domain)"/>
    <property type="match status" value="1"/>
</dbReference>
<dbReference type="Gene3D" id="1.20.200.10">
    <property type="entry name" value="Fumarase/aspartase (Central domain)"/>
    <property type="match status" value="1"/>
</dbReference>
<dbReference type="Gene3D" id="1.10.275.10">
    <property type="entry name" value="Fumarase/aspartase (N-terminal domain)"/>
    <property type="match status" value="1"/>
</dbReference>
<dbReference type="InterPro" id="IPR019468">
    <property type="entry name" value="AdenyloSucc_lyase_C"/>
</dbReference>
<dbReference type="InterPro" id="IPR024083">
    <property type="entry name" value="Fumarase/histidase_N"/>
</dbReference>
<dbReference type="InterPro" id="IPR020557">
    <property type="entry name" value="Fumarate_lyase_CS"/>
</dbReference>
<dbReference type="InterPro" id="IPR000362">
    <property type="entry name" value="Fumarate_lyase_fam"/>
</dbReference>
<dbReference type="InterPro" id="IPR022761">
    <property type="entry name" value="Fumarate_lyase_N"/>
</dbReference>
<dbReference type="InterPro" id="IPR008948">
    <property type="entry name" value="L-Aspartase-like"/>
</dbReference>
<dbReference type="InterPro" id="IPR004769">
    <property type="entry name" value="Pur_lyase"/>
</dbReference>
<dbReference type="NCBIfam" id="TIGR00928">
    <property type="entry name" value="purB"/>
    <property type="match status" value="1"/>
</dbReference>
<dbReference type="PANTHER" id="PTHR43172">
    <property type="entry name" value="ADENYLOSUCCINATE LYASE"/>
    <property type="match status" value="1"/>
</dbReference>
<dbReference type="PANTHER" id="PTHR43172:SF1">
    <property type="entry name" value="ADENYLOSUCCINATE LYASE"/>
    <property type="match status" value="1"/>
</dbReference>
<dbReference type="Pfam" id="PF10397">
    <property type="entry name" value="ADSL_C"/>
    <property type="match status" value="1"/>
</dbReference>
<dbReference type="Pfam" id="PF00206">
    <property type="entry name" value="Lyase_1"/>
    <property type="match status" value="1"/>
</dbReference>
<dbReference type="PRINTS" id="PR00149">
    <property type="entry name" value="FUMRATELYASE"/>
</dbReference>
<dbReference type="SMART" id="SM00998">
    <property type="entry name" value="ADSL_C"/>
    <property type="match status" value="1"/>
</dbReference>
<dbReference type="SUPFAM" id="SSF48557">
    <property type="entry name" value="L-aspartase-like"/>
    <property type="match status" value="1"/>
</dbReference>
<dbReference type="PROSITE" id="PS00163">
    <property type="entry name" value="FUMARATE_LYASES"/>
    <property type="match status" value="1"/>
</dbReference>
<protein>
    <recommendedName>
        <fullName>Adenylosuccinate lyase</fullName>
        <shortName>ASL</shortName>
        <ecNumber evidence="2">4.3.2.2</ecNumber>
    </recommendedName>
    <alternativeName>
        <fullName>Adenylosuccinase</fullName>
        <shortName>ASase</shortName>
    </alternativeName>
</protein>
<sequence length="440" mass="50029">MLERYANEEMKALWNEQTKFETYLEVEKAVVRAWNKLGQIQDSDCEKICAKAAFNLERIKEIEKTTKHDLIAFTTCVAESLGEESRFFHYGITSSDCIDTAMALLMTKSLKLIQKGVKNLYETLKNRALEHKDTLMVGRSHGVFGEPITFGLVLALFADEIKRHLKALDLTMEFISVGAISGAMGNFAHAPLELEELACEFLGLKTANISNQVIQRDRYARLACDLALLASSCEKIAVNIRHLQRSEVYEVEEAFSTGQKGSSAMPHKRNPILSENITGLCRVIRSFTTPMLENVALWHERDMSHSSVERFALPDLFITSDFMLSRLNSVIKNLVVYPKNMLKNLALSGGLVFSQRVLLELPKKGLSREESYSIVQENAMKIWEVLQQGAFKNTDENLFLNALLNDERLKKYLSEDEIKACFDYNYYTKNVGAIFKRVFE</sequence>
<proteinExistence type="inferred from homology"/>
<accession>P56468</accession>
<keyword id="KW-0456">Lyase</keyword>
<keyword id="KW-0658">Purine biosynthesis</keyword>
<keyword id="KW-1185">Reference proteome</keyword>
<evidence type="ECO:0000250" key="1"/>
<evidence type="ECO:0000250" key="2">
    <source>
        <dbReference type="UniProtKB" id="P0AB89"/>
    </source>
</evidence>
<evidence type="ECO:0000305" key="3"/>
<feature type="chain" id="PRO_0000137881" description="Adenylosuccinate lyase">
    <location>
        <begin position="1"/>
        <end position="440"/>
    </location>
</feature>
<feature type="active site" description="Proton donor/acceptor" evidence="2">
    <location>
        <position position="141"/>
    </location>
</feature>
<feature type="active site" description="Proton donor/acceptor" evidence="2">
    <location>
        <position position="262"/>
    </location>
</feature>
<feature type="binding site" evidence="2">
    <location>
        <begin position="4"/>
        <end position="5"/>
    </location>
    <ligand>
        <name>N(6)-(1,2-dicarboxyethyl)-AMP</name>
        <dbReference type="ChEBI" id="CHEBI:57567"/>
    </ligand>
</feature>
<feature type="binding site" evidence="2">
    <location>
        <begin position="67"/>
        <end position="69"/>
    </location>
    <ligand>
        <name>N(6)-(1,2-dicarboxyethyl)-AMP</name>
        <dbReference type="ChEBI" id="CHEBI:57567"/>
    </ligand>
</feature>
<feature type="binding site" evidence="2">
    <location>
        <begin position="93"/>
        <end position="94"/>
    </location>
    <ligand>
        <name>N(6)-(1,2-dicarboxyethyl)-AMP</name>
        <dbReference type="ChEBI" id="CHEBI:57567"/>
    </ligand>
</feature>
<feature type="binding site" evidence="2">
    <location>
        <position position="212"/>
    </location>
    <ligand>
        <name>N(6)-(1,2-dicarboxyethyl)-AMP</name>
        <dbReference type="ChEBI" id="CHEBI:57567"/>
    </ligand>
</feature>
<feature type="binding site" evidence="2">
    <location>
        <position position="263"/>
    </location>
    <ligand>
        <name>N(6)-(1,2-dicarboxyethyl)-AMP</name>
        <dbReference type="ChEBI" id="CHEBI:57567"/>
    </ligand>
</feature>
<feature type="binding site" evidence="2">
    <location>
        <begin position="268"/>
        <end position="270"/>
    </location>
    <ligand>
        <name>N(6)-(1,2-dicarboxyethyl)-AMP</name>
        <dbReference type="ChEBI" id="CHEBI:57567"/>
    </ligand>
</feature>
<feature type="binding site" evidence="2">
    <location>
        <position position="276"/>
    </location>
    <ligand>
        <name>N(6)-(1,2-dicarboxyethyl)-AMP</name>
        <dbReference type="ChEBI" id="CHEBI:57567"/>
    </ligand>
</feature>
<feature type="binding site" evidence="2">
    <location>
        <begin position="307"/>
        <end position="311"/>
    </location>
    <ligand>
        <name>N(6)-(1,2-dicarboxyethyl)-AMP</name>
        <dbReference type="ChEBI" id="CHEBI:57567"/>
    </ligand>
</feature>
<organism>
    <name type="scientific">Helicobacter pylori (strain ATCC 700392 / 26695)</name>
    <name type="common">Campylobacter pylori</name>
    <dbReference type="NCBI Taxonomy" id="85962"/>
    <lineage>
        <taxon>Bacteria</taxon>
        <taxon>Pseudomonadati</taxon>
        <taxon>Campylobacterota</taxon>
        <taxon>Epsilonproteobacteria</taxon>
        <taxon>Campylobacterales</taxon>
        <taxon>Helicobacteraceae</taxon>
        <taxon>Helicobacter</taxon>
    </lineage>
</organism>
<comment type="function">
    <text evidence="2">Catalyzes two reactions in de novo purine nucleotide biosynthesis. Catalyzes the breakdown of 5-aminoimidazole- (N-succinylocarboxamide) ribotide (SAICAR or 2-[5-amino-1-(5-phospho-beta-D-ribosyl)imidazole-4-carboxamido]succinate) to 5-aminoimidazole-4-carboxamide ribotide (AICAR or 5-amino-1-(5-phospho-beta-D-ribosyl)imidazole-4-carboxamide) and fumarate, and of adenylosuccinate (ADS or N(6)-(1,2-dicarboxyethyl)-AMP) to adenosine monophosphate (AMP) and fumarate.</text>
</comment>
<comment type="catalytic activity">
    <reaction evidence="2">
        <text>N(6)-(1,2-dicarboxyethyl)-AMP = fumarate + AMP</text>
        <dbReference type="Rhea" id="RHEA:16853"/>
        <dbReference type="ChEBI" id="CHEBI:29806"/>
        <dbReference type="ChEBI" id="CHEBI:57567"/>
        <dbReference type="ChEBI" id="CHEBI:456215"/>
        <dbReference type="EC" id="4.3.2.2"/>
    </reaction>
    <physiologicalReaction direction="left-to-right" evidence="2">
        <dbReference type="Rhea" id="RHEA:16854"/>
    </physiologicalReaction>
</comment>
<comment type="catalytic activity">
    <reaction evidence="2">
        <text>(2S)-2-[5-amino-1-(5-phospho-beta-D-ribosyl)imidazole-4-carboxamido]succinate = 5-amino-1-(5-phospho-beta-D-ribosyl)imidazole-4-carboxamide + fumarate</text>
        <dbReference type="Rhea" id="RHEA:23920"/>
        <dbReference type="ChEBI" id="CHEBI:29806"/>
        <dbReference type="ChEBI" id="CHEBI:58443"/>
        <dbReference type="ChEBI" id="CHEBI:58475"/>
        <dbReference type="EC" id="4.3.2.2"/>
    </reaction>
    <physiologicalReaction direction="left-to-right" evidence="2">
        <dbReference type="Rhea" id="RHEA:23921"/>
    </physiologicalReaction>
</comment>
<comment type="pathway">
    <text>Purine metabolism; AMP biosynthesis via de novo pathway; AMP from IMP: step 2/2.</text>
</comment>
<comment type="pathway">
    <text>Purine metabolism; IMP biosynthesis via de novo pathway; 5-amino-1-(5-phospho-D-ribosyl)imidazole-4-carboxamide from 5-amino-1-(5-phospho-D-ribosyl)imidazole-4-carboxylate: step 2/2.</text>
</comment>
<comment type="subunit">
    <text evidence="1">Homotetramer. Residues from neighboring subunits contribute catalytic and substrate-binding residues to each active site (By similarity).</text>
</comment>
<comment type="similarity">
    <text evidence="3">Belongs to the lyase 1 family. Adenylosuccinate lyase subfamily.</text>
</comment>
<name>PUR8_HELPY</name>
<reference key="1">
    <citation type="journal article" date="1997" name="Nature">
        <title>The complete genome sequence of the gastric pathogen Helicobacter pylori.</title>
        <authorList>
            <person name="Tomb J.-F."/>
            <person name="White O."/>
            <person name="Kerlavage A.R."/>
            <person name="Clayton R.A."/>
            <person name="Sutton G.G."/>
            <person name="Fleischmann R.D."/>
            <person name="Ketchum K.A."/>
            <person name="Klenk H.-P."/>
            <person name="Gill S.R."/>
            <person name="Dougherty B.A."/>
            <person name="Nelson K.E."/>
            <person name="Quackenbush J."/>
            <person name="Zhou L."/>
            <person name="Kirkness E.F."/>
            <person name="Peterson S.N."/>
            <person name="Loftus B.J."/>
            <person name="Richardson D.L."/>
            <person name="Dodson R.J."/>
            <person name="Khalak H.G."/>
            <person name="Glodek A."/>
            <person name="McKenney K."/>
            <person name="FitzGerald L.M."/>
            <person name="Lee N."/>
            <person name="Adams M.D."/>
            <person name="Hickey E.K."/>
            <person name="Berg D.E."/>
            <person name="Gocayne J.D."/>
            <person name="Utterback T.R."/>
            <person name="Peterson J.D."/>
            <person name="Kelley J.M."/>
            <person name="Cotton M.D."/>
            <person name="Weidman J.F."/>
            <person name="Fujii C."/>
            <person name="Bowman C."/>
            <person name="Watthey L."/>
            <person name="Wallin E."/>
            <person name="Hayes W.S."/>
            <person name="Borodovsky M."/>
            <person name="Karp P.D."/>
            <person name="Smith H.O."/>
            <person name="Fraser C.M."/>
            <person name="Venter J.C."/>
        </authorList>
    </citation>
    <scope>NUCLEOTIDE SEQUENCE [LARGE SCALE GENOMIC DNA]</scope>
    <source>
        <strain>ATCC 700392 / 26695</strain>
    </source>
</reference>